<feature type="chain" id="PRO_1000190519" description="Glutamyl-tRNA reductase">
    <location>
        <begin position="1"/>
        <end position="443"/>
    </location>
</feature>
<feature type="active site" description="Nucleophile" evidence="1">
    <location>
        <position position="50"/>
    </location>
</feature>
<feature type="binding site" evidence="1">
    <location>
        <begin position="49"/>
        <end position="52"/>
    </location>
    <ligand>
        <name>substrate</name>
    </ligand>
</feature>
<feature type="binding site" evidence="1">
    <location>
        <position position="109"/>
    </location>
    <ligand>
        <name>substrate</name>
    </ligand>
</feature>
<feature type="binding site" evidence="1">
    <location>
        <begin position="114"/>
        <end position="116"/>
    </location>
    <ligand>
        <name>substrate</name>
    </ligand>
</feature>
<feature type="binding site" evidence="1">
    <location>
        <position position="120"/>
    </location>
    <ligand>
        <name>substrate</name>
    </ligand>
</feature>
<feature type="binding site" evidence="1">
    <location>
        <begin position="189"/>
        <end position="194"/>
    </location>
    <ligand>
        <name>NADP(+)</name>
        <dbReference type="ChEBI" id="CHEBI:58349"/>
    </ligand>
</feature>
<feature type="site" description="Important for activity" evidence="1">
    <location>
        <position position="99"/>
    </location>
</feature>
<comment type="function">
    <text evidence="1">Catalyzes the NADPH-dependent reduction of glutamyl-tRNA(Glu) to glutamate 1-semialdehyde (GSA).</text>
</comment>
<comment type="catalytic activity">
    <reaction evidence="1">
        <text>(S)-4-amino-5-oxopentanoate + tRNA(Glu) + NADP(+) = L-glutamyl-tRNA(Glu) + NADPH + H(+)</text>
        <dbReference type="Rhea" id="RHEA:12344"/>
        <dbReference type="Rhea" id="RHEA-COMP:9663"/>
        <dbReference type="Rhea" id="RHEA-COMP:9680"/>
        <dbReference type="ChEBI" id="CHEBI:15378"/>
        <dbReference type="ChEBI" id="CHEBI:57501"/>
        <dbReference type="ChEBI" id="CHEBI:57783"/>
        <dbReference type="ChEBI" id="CHEBI:58349"/>
        <dbReference type="ChEBI" id="CHEBI:78442"/>
        <dbReference type="ChEBI" id="CHEBI:78520"/>
        <dbReference type="EC" id="1.2.1.70"/>
    </reaction>
</comment>
<comment type="pathway">
    <text evidence="1">Porphyrin-containing compound metabolism; protoporphyrin-IX biosynthesis; 5-aminolevulinate from L-glutamyl-tRNA(Glu): step 1/2.</text>
</comment>
<comment type="subunit">
    <text evidence="1">Homodimer.</text>
</comment>
<comment type="domain">
    <text evidence="1">Possesses an unusual extended V-shaped dimeric structure with each monomer consisting of three distinct domains arranged along a curved 'spinal' alpha-helix. The N-terminal catalytic domain specifically recognizes the glutamate moiety of the substrate. The second domain is the NADPH-binding domain, and the third C-terminal domain is responsible for dimerization.</text>
</comment>
<comment type="miscellaneous">
    <text evidence="1">During catalysis, the active site Cys acts as a nucleophile attacking the alpha-carbonyl group of tRNA-bound glutamate with the formation of a thioester intermediate between enzyme and glutamate, and the concomitant release of tRNA(Glu). The thioester intermediate is finally reduced by direct hydride transfer from NADPH, to form the product GSA.</text>
</comment>
<comment type="similarity">
    <text evidence="1">Belongs to the glutamyl-tRNA reductase family.</text>
</comment>
<accession>B8G2M3</accession>
<evidence type="ECO:0000255" key="1">
    <source>
        <dbReference type="HAMAP-Rule" id="MF_00087"/>
    </source>
</evidence>
<sequence>MFPITIGLNHKTAPVEIREKVSFHPSEINKALMELNELSALNGIVLLSTCNRLEIYAATPEVELGVSVIKKFLARHGKLREEDINQYLYVHTLYDSVRHLFRVVAGLDSMVMGETQILGQVAEAYEKSSQLNLSNKIIHAIFQNALAVGKRVRSETQIDQHPTSVSYTAVELAKQTFGDVQGKSILILGAGEMSALTAKHLVASGADTVLVSNRSMQRAQALAEEFSGRAIPYEELDTALAEADIVISATAAAHFVIKPERMRRVMEQRRQRALLLIDIAVPRDIHPNVGELEGVTLFDIDDLRGVVDSHQKAREEAALQAGRILEEEMGRFVKWHNSLYVVPTIVALQRRGEEVREIMLKSALNKLGPIDEKQEKIIRSMANSIVTHLLHAPIANLKEAANTSQGHLYTEILQNLFDLDGNELSPHAGWSVHHAASHHSNQG</sequence>
<protein>
    <recommendedName>
        <fullName evidence="1">Glutamyl-tRNA reductase</fullName>
        <shortName evidence="1">GluTR</shortName>
        <ecNumber evidence="1">1.2.1.70</ecNumber>
    </recommendedName>
</protein>
<dbReference type="EC" id="1.2.1.70" evidence="1"/>
<dbReference type="EMBL" id="CP001336">
    <property type="protein sequence ID" value="ACL21373.1"/>
    <property type="molecule type" value="Genomic_DNA"/>
</dbReference>
<dbReference type="RefSeq" id="WP_011460182.1">
    <property type="nucleotide sequence ID" value="NC_011830.1"/>
</dbReference>
<dbReference type="SMR" id="B8G2M3"/>
<dbReference type="KEGG" id="dhd:Dhaf_3355"/>
<dbReference type="HOGENOM" id="CLU_035113_2_2_9"/>
<dbReference type="UniPathway" id="UPA00251">
    <property type="reaction ID" value="UER00316"/>
</dbReference>
<dbReference type="Proteomes" id="UP000007726">
    <property type="component" value="Chromosome"/>
</dbReference>
<dbReference type="GO" id="GO:0008883">
    <property type="term" value="F:glutamyl-tRNA reductase activity"/>
    <property type="evidence" value="ECO:0007669"/>
    <property type="project" value="UniProtKB-UniRule"/>
</dbReference>
<dbReference type="GO" id="GO:0050661">
    <property type="term" value="F:NADP binding"/>
    <property type="evidence" value="ECO:0007669"/>
    <property type="project" value="InterPro"/>
</dbReference>
<dbReference type="GO" id="GO:0019353">
    <property type="term" value="P:protoporphyrinogen IX biosynthetic process from glutamate"/>
    <property type="evidence" value="ECO:0007669"/>
    <property type="project" value="TreeGrafter"/>
</dbReference>
<dbReference type="CDD" id="cd05213">
    <property type="entry name" value="NAD_bind_Glutamyl_tRNA_reduct"/>
    <property type="match status" value="1"/>
</dbReference>
<dbReference type="FunFam" id="3.30.460.30:FF:000001">
    <property type="entry name" value="Glutamyl-tRNA reductase"/>
    <property type="match status" value="1"/>
</dbReference>
<dbReference type="FunFam" id="3.40.50.720:FF:000031">
    <property type="entry name" value="Glutamyl-tRNA reductase"/>
    <property type="match status" value="1"/>
</dbReference>
<dbReference type="Gene3D" id="3.30.460.30">
    <property type="entry name" value="Glutamyl-tRNA reductase, N-terminal domain"/>
    <property type="match status" value="1"/>
</dbReference>
<dbReference type="Gene3D" id="3.40.50.720">
    <property type="entry name" value="NAD(P)-binding Rossmann-like Domain"/>
    <property type="match status" value="1"/>
</dbReference>
<dbReference type="HAMAP" id="MF_00087">
    <property type="entry name" value="Glu_tRNA_reductase"/>
    <property type="match status" value="1"/>
</dbReference>
<dbReference type="InterPro" id="IPR000343">
    <property type="entry name" value="4pyrrol_synth_GluRdtase"/>
</dbReference>
<dbReference type="InterPro" id="IPR015896">
    <property type="entry name" value="4pyrrol_synth_GluRdtase_dimer"/>
</dbReference>
<dbReference type="InterPro" id="IPR015895">
    <property type="entry name" value="4pyrrol_synth_GluRdtase_N"/>
</dbReference>
<dbReference type="InterPro" id="IPR036453">
    <property type="entry name" value="GluRdtase_dimer_dom_sf"/>
</dbReference>
<dbReference type="InterPro" id="IPR036343">
    <property type="entry name" value="GluRdtase_N_sf"/>
</dbReference>
<dbReference type="InterPro" id="IPR036291">
    <property type="entry name" value="NAD(P)-bd_dom_sf"/>
</dbReference>
<dbReference type="InterPro" id="IPR006151">
    <property type="entry name" value="Shikm_DH/Glu-tRNA_Rdtase"/>
</dbReference>
<dbReference type="NCBIfam" id="TIGR01035">
    <property type="entry name" value="hemA"/>
    <property type="match status" value="1"/>
</dbReference>
<dbReference type="NCBIfam" id="NF000744">
    <property type="entry name" value="PRK00045.1-3"/>
    <property type="match status" value="1"/>
</dbReference>
<dbReference type="PANTHER" id="PTHR43013">
    <property type="entry name" value="GLUTAMYL-TRNA REDUCTASE"/>
    <property type="match status" value="1"/>
</dbReference>
<dbReference type="PANTHER" id="PTHR43013:SF1">
    <property type="entry name" value="GLUTAMYL-TRNA REDUCTASE"/>
    <property type="match status" value="1"/>
</dbReference>
<dbReference type="Pfam" id="PF00745">
    <property type="entry name" value="GlutR_dimer"/>
    <property type="match status" value="1"/>
</dbReference>
<dbReference type="Pfam" id="PF05201">
    <property type="entry name" value="GlutR_N"/>
    <property type="match status" value="1"/>
</dbReference>
<dbReference type="Pfam" id="PF01488">
    <property type="entry name" value="Shikimate_DH"/>
    <property type="match status" value="1"/>
</dbReference>
<dbReference type="PIRSF" id="PIRSF000445">
    <property type="entry name" value="4pyrrol_synth_GluRdtase"/>
    <property type="match status" value="1"/>
</dbReference>
<dbReference type="SUPFAM" id="SSF69742">
    <property type="entry name" value="Glutamyl tRNA-reductase catalytic, N-terminal domain"/>
    <property type="match status" value="1"/>
</dbReference>
<dbReference type="SUPFAM" id="SSF69075">
    <property type="entry name" value="Glutamyl tRNA-reductase dimerization domain"/>
    <property type="match status" value="1"/>
</dbReference>
<dbReference type="SUPFAM" id="SSF51735">
    <property type="entry name" value="NAD(P)-binding Rossmann-fold domains"/>
    <property type="match status" value="1"/>
</dbReference>
<proteinExistence type="inferred from homology"/>
<gene>
    <name evidence="1" type="primary">hemA</name>
    <name type="ordered locus">Dhaf_3355</name>
</gene>
<keyword id="KW-0521">NADP</keyword>
<keyword id="KW-0560">Oxidoreductase</keyword>
<keyword id="KW-0627">Porphyrin biosynthesis</keyword>
<organism>
    <name type="scientific">Desulfitobacterium hafniense (strain DSM 10664 / DCB-2)</name>
    <dbReference type="NCBI Taxonomy" id="272564"/>
    <lineage>
        <taxon>Bacteria</taxon>
        <taxon>Bacillati</taxon>
        <taxon>Bacillota</taxon>
        <taxon>Clostridia</taxon>
        <taxon>Eubacteriales</taxon>
        <taxon>Desulfitobacteriaceae</taxon>
        <taxon>Desulfitobacterium</taxon>
    </lineage>
</organism>
<reference key="1">
    <citation type="journal article" date="2012" name="BMC Microbiol.">
        <title>Genome sequence of Desulfitobacterium hafniense DCB-2, a Gram-positive anaerobe capable of dehalogenation and metal reduction.</title>
        <authorList>
            <person name="Kim S.H."/>
            <person name="Harzman C."/>
            <person name="Davis J.K."/>
            <person name="Hutcheson R."/>
            <person name="Broderick J.B."/>
            <person name="Marsh T.L."/>
            <person name="Tiedje J.M."/>
        </authorList>
    </citation>
    <scope>NUCLEOTIDE SEQUENCE [LARGE SCALE GENOMIC DNA]</scope>
    <source>
        <strain>DSM 10664 / DCB-2</strain>
    </source>
</reference>
<name>HEM1_DESHD</name>